<sequence length="669" mass="75251">MSKEIAKKRIEELRDLLNTFNYQYHVLDNPSVSDAEYDRDMQELIKLEAENPEFMSEDSPSIRVGGTVLDIFEKVTHKSPMLSLGNAFNEGDLRDFDRRVHQGIDDANVRYICELKIDGLAVSLHYEKGRFIQGATRGDGITGEDITQNLKTIKAIPLRLNEEVTLEARGEAYMPKRSFVKLNEEKEQNGEDVFANPRNAAAGSIRQLDPKIAAKRNLSMFVYGLANVEEKTIPSHSESLDFLGELGFKTNPNRRTCETIEDVIAYVEEWQEKRPHLDYEIDGIVIKVDDVAIQESLGTTAKSPRWAIAYKFPAEEVVTRLTGIELSVGRTGVVTPTAELEPVRVAGTIVRRASLHNEDLIREKDIRIGDYVVVKKAGDIIPEVVNVIFDKRTGEEEEYHMPTHCPACESELVRLEEEVALRCINPTCPAQIREGLIHFVSRNAMNIDGLGERVITQLFDADYIRTFADLYSLTKEQLLELERFGEKSATNLVQAIENSKENSLERLLFGLGIRHVGAKAARTFAEHFETMDELVKATEEELKTINEIGEKMAQSVVTYFDNEDVLELLQQFKEYGVNMAYKGIKIADLQNVESYFAGKTVVLTGKLEVMGRSEAKKKIEALGGKVTGSVSKSTDLLVAGEAAGSKLAQAEKHNVEVWNEERFLQELNK</sequence>
<gene>
    <name evidence="1" type="primary">ligA</name>
    <name type="ordered locus">BcerKBAB4_0287</name>
</gene>
<evidence type="ECO:0000255" key="1">
    <source>
        <dbReference type="HAMAP-Rule" id="MF_01588"/>
    </source>
</evidence>
<feature type="chain" id="PRO_0000380305" description="DNA ligase">
    <location>
        <begin position="1"/>
        <end position="669"/>
    </location>
</feature>
<feature type="domain" description="BRCT" evidence="1">
    <location>
        <begin position="591"/>
        <end position="669"/>
    </location>
</feature>
<feature type="active site" description="N6-AMP-lysine intermediate" evidence="1">
    <location>
        <position position="116"/>
    </location>
</feature>
<feature type="binding site" evidence="1">
    <location>
        <begin position="34"/>
        <end position="38"/>
    </location>
    <ligand>
        <name>NAD(+)</name>
        <dbReference type="ChEBI" id="CHEBI:57540"/>
    </ligand>
</feature>
<feature type="binding site" evidence="1">
    <location>
        <begin position="83"/>
        <end position="84"/>
    </location>
    <ligand>
        <name>NAD(+)</name>
        <dbReference type="ChEBI" id="CHEBI:57540"/>
    </ligand>
</feature>
<feature type="binding site" evidence="1">
    <location>
        <position position="114"/>
    </location>
    <ligand>
        <name>NAD(+)</name>
        <dbReference type="ChEBI" id="CHEBI:57540"/>
    </ligand>
</feature>
<feature type="binding site" evidence="1">
    <location>
        <position position="137"/>
    </location>
    <ligand>
        <name>NAD(+)</name>
        <dbReference type="ChEBI" id="CHEBI:57540"/>
    </ligand>
</feature>
<feature type="binding site" evidence="1">
    <location>
        <position position="171"/>
    </location>
    <ligand>
        <name>NAD(+)</name>
        <dbReference type="ChEBI" id="CHEBI:57540"/>
    </ligand>
</feature>
<feature type="binding site" evidence="1">
    <location>
        <position position="287"/>
    </location>
    <ligand>
        <name>NAD(+)</name>
        <dbReference type="ChEBI" id="CHEBI:57540"/>
    </ligand>
</feature>
<feature type="binding site" evidence="1">
    <location>
        <position position="311"/>
    </location>
    <ligand>
        <name>NAD(+)</name>
        <dbReference type="ChEBI" id="CHEBI:57540"/>
    </ligand>
</feature>
<feature type="binding site" evidence="1">
    <location>
        <position position="405"/>
    </location>
    <ligand>
        <name>Zn(2+)</name>
        <dbReference type="ChEBI" id="CHEBI:29105"/>
    </ligand>
</feature>
<feature type="binding site" evidence="1">
    <location>
        <position position="408"/>
    </location>
    <ligand>
        <name>Zn(2+)</name>
        <dbReference type="ChEBI" id="CHEBI:29105"/>
    </ligand>
</feature>
<feature type="binding site" evidence="1">
    <location>
        <position position="423"/>
    </location>
    <ligand>
        <name>Zn(2+)</name>
        <dbReference type="ChEBI" id="CHEBI:29105"/>
    </ligand>
</feature>
<feature type="binding site" evidence="1">
    <location>
        <position position="428"/>
    </location>
    <ligand>
        <name>Zn(2+)</name>
        <dbReference type="ChEBI" id="CHEBI:29105"/>
    </ligand>
</feature>
<keyword id="KW-0227">DNA damage</keyword>
<keyword id="KW-0234">DNA repair</keyword>
<keyword id="KW-0235">DNA replication</keyword>
<keyword id="KW-0436">Ligase</keyword>
<keyword id="KW-0460">Magnesium</keyword>
<keyword id="KW-0464">Manganese</keyword>
<keyword id="KW-0479">Metal-binding</keyword>
<keyword id="KW-0520">NAD</keyword>
<keyword id="KW-0862">Zinc</keyword>
<dbReference type="EC" id="6.5.1.2" evidence="1"/>
<dbReference type="EMBL" id="CP000903">
    <property type="protein sequence ID" value="ABY41553.1"/>
    <property type="molecule type" value="Genomic_DNA"/>
</dbReference>
<dbReference type="RefSeq" id="WP_002010032.1">
    <property type="nucleotide sequence ID" value="NC_010184.1"/>
</dbReference>
<dbReference type="SMR" id="A9VRG3"/>
<dbReference type="KEGG" id="bwe:BcerKBAB4_0287"/>
<dbReference type="eggNOG" id="COG0272">
    <property type="taxonomic scope" value="Bacteria"/>
</dbReference>
<dbReference type="HOGENOM" id="CLU_007764_2_1_9"/>
<dbReference type="Proteomes" id="UP000002154">
    <property type="component" value="Chromosome"/>
</dbReference>
<dbReference type="GO" id="GO:0005829">
    <property type="term" value="C:cytosol"/>
    <property type="evidence" value="ECO:0007669"/>
    <property type="project" value="TreeGrafter"/>
</dbReference>
<dbReference type="GO" id="GO:0003677">
    <property type="term" value="F:DNA binding"/>
    <property type="evidence" value="ECO:0007669"/>
    <property type="project" value="InterPro"/>
</dbReference>
<dbReference type="GO" id="GO:0003911">
    <property type="term" value="F:DNA ligase (NAD+) activity"/>
    <property type="evidence" value="ECO:0007669"/>
    <property type="project" value="UniProtKB-UniRule"/>
</dbReference>
<dbReference type="GO" id="GO:0046872">
    <property type="term" value="F:metal ion binding"/>
    <property type="evidence" value="ECO:0007669"/>
    <property type="project" value="UniProtKB-KW"/>
</dbReference>
<dbReference type="GO" id="GO:0006281">
    <property type="term" value="P:DNA repair"/>
    <property type="evidence" value="ECO:0007669"/>
    <property type="project" value="UniProtKB-KW"/>
</dbReference>
<dbReference type="GO" id="GO:0006260">
    <property type="term" value="P:DNA replication"/>
    <property type="evidence" value="ECO:0007669"/>
    <property type="project" value="UniProtKB-KW"/>
</dbReference>
<dbReference type="CDD" id="cd17748">
    <property type="entry name" value="BRCT_DNA_ligase_like"/>
    <property type="match status" value="1"/>
</dbReference>
<dbReference type="CDD" id="cd00114">
    <property type="entry name" value="LIGANc"/>
    <property type="match status" value="1"/>
</dbReference>
<dbReference type="FunFam" id="1.10.150.20:FF:000006">
    <property type="entry name" value="DNA ligase"/>
    <property type="match status" value="1"/>
</dbReference>
<dbReference type="FunFam" id="1.10.150.20:FF:000007">
    <property type="entry name" value="DNA ligase"/>
    <property type="match status" value="1"/>
</dbReference>
<dbReference type="FunFam" id="1.10.287.610:FF:000002">
    <property type="entry name" value="DNA ligase"/>
    <property type="match status" value="1"/>
</dbReference>
<dbReference type="FunFam" id="2.40.50.140:FF:000012">
    <property type="entry name" value="DNA ligase"/>
    <property type="match status" value="1"/>
</dbReference>
<dbReference type="FunFam" id="3.30.470.30:FF:000001">
    <property type="entry name" value="DNA ligase"/>
    <property type="match status" value="1"/>
</dbReference>
<dbReference type="FunFam" id="3.40.50.10190:FF:000026">
    <property type="entry name" value="DNA ligase"/>
    <property type="match status" value="1"/>
</dbReference>
<dbReference type="FunFam" id="6.20.10.30:FF:000002">
    <property type="entry name" value="DNA ligase"/>
    <property type="match status" value="1"/>
</dbReference>
<dbReference type="Gene3D" id="6.20.10.30">
    <property type="match status" value="1"/>
</dbReference>
<dbReference type="Gene3D" id="1.10.150.20">
    <property type="entry name" value="5' to 3' exonuclease, C-terminal subdomain"/>
    <property type="match status" value="2"/>
</dbReference>
<dbReference type="Gene3D" id="3.40.50.10190">
    <property type="entry name" value="BRCT domain"/>
    <property type="match status" value="1"/>
</dbReference>
<dbReference type="Gene3D" id="3.30.470.30">
    <property type="entry name" value="DNA ligase/mRNA capping enzyme"/>
    <property type="match status" value="1"/>
</dbReference>
<dbReference type="Gene3D" id="1.10.287.610">
    <property type="entry name" value="Helix hairpin bin"/>
    <property type="match status" value="1"/>
</dbReference>
<dbReference type="Gene3D" id="2.40.50.140">
    <property type="entry name" value="Nucleic acid-binding proteins"/>
    <property type="match status" value="1"/>
</dbReference>
<dbReference type="HAMAP" id="MF_01588">
    <property type="entry name" value="DNA_ligase_A"/>
    <property type="match status" value="1"/>
</dbReference>
<dbReference type="InterPro" id="IPR001357">
    <property type="entry name" value="BRCT_dom"/>
</dbReference>
<dbReference type="InterPro" id="IPR036420">
    <property type="entry name" value="BRCT_dom_sf"/>
</dbReference>
<dbReference type="InterPro" id="IPR041663">
    <property type="entry name" value="DisA/LigA_HHH"/>
</dbReference>
<dbReference type="InterPro" id="IPR001679">
    <property type="entry name" value="DNA_ligase"/>
</dbReference>
<dbReference type="InterPro" id="IPR018239">
    <property type="entry name" value="DNA_ligase_AS"/>
</dbReference>
<dbReference type="InterPro" id="IPR033136">
    <property type="entry name" value="DNA_ligase_CS"/>
</dbReference>
<dbReference type="InterPro" id="IPR013839">
    <property type="entry name" value="DNAligase_adenylation"/>
</dbReference>
<dbReference type="InterPro" id="IPR013840">
    <property type="entry name" value="DNAligase_N"/>
</dbReference>
<dbReference type="InterPro" id="IPR003583">
    <property type="entry name" value="Hlx-hairpin-Hlx_DNA-bd_motif"/>
</dbReference>
<dbReference type="InterPro" id="IPR012340">
    <property type="entry name" value="NA-bd_OB-fold"/>
</dbReference>
<dbReference type="InterPro" id="IPR004150">
    <property type="entry name" value="NAD_DNA_ligase_OB"/>
</dbReference>
<dbReference type="InterPro" id="IPR010994">
    <property type="entry name" value="RuvA_2-like"/>
</dbReference>
<dbReference type="InterPro" id="IPR004149">
    <property type="entry name" value="Znf_DNAligase_C4"/>
</dbReference>
<dbReference type="NCBIfam" id="TIGR00575">
    <property type="entry name" value="dnlj"/>
    <property type="match status" value="1"/>
</dbReference>
<dbReference type="NCBIfam" id="NF005932">
    <property type="entry name" value="PRK07956.1"/>
    <property type="match status" value="1"/>
</dbReference>
<dbReference type="PANTHER" id="PTHR23389">
    <property type="entry name" value="CHROMOSOME TRANSMISSION FIDELITY FACTOR 18"/>
    <property type="match status" value="1"/>
</dbReference>
<dbReference type="PANTHER" id="PTHR23389:SF9">
    <property type="entry name" value="DNA LIGASE"/>
    <property type="match status" value="1"/>
</dbReference>
<dbReference type="Pfam" id="PF00533">
    <property type="entry name" value="BRCT"/>
    <property type="match status" value="1"/>
</dbReference>
<dbReference type="Pfam" id="PF01653">
    <property type="entry name" value="DNA_ligase_aden"/>
    <property type="match status" value="1"/>
</dbReference>
<dbReference type="Pfam" id="PF03120">
    <property type="entry name" value="DNA_ligase_OB"/>
    <property type="match status" value="1"/>
</dbReference>
<dbReference type="Pfam" id="PF03119">
    <property type="entry name" value="DNA_ligase_ZBD"/>
    <property type="match status" value="1"/>
</dbReference>
<dbReference type="Pfam" id="PF12826">
    <property type="entry name" value="HHH_2"/>
    <property type="match status" value="1"/>
</dbReference>
<dbReference type="Pfam" id="PF14520">
    <property type="entry name" value="HHH_5"/>
    <property type="match status" value="1"/>
</dbReference>
<dbReference type="PIRSF" id="PIRSF001604">
    <property type="entry name" value="LigA"/>
    <property type="match status" value="1"/>
</dbReference>
<dbReference type="SMART" id="SM00292">
    <property type="entry name" value="BRCT"/>
    <property type="match status" value="1"/>
</dbReference>
<dbReference type="SMART" id="SM00278">
    <property type="entry name" value="HhH1"/>
    <property type="match status" value="3"/>
</dbReference>
<dbReference type="SMART" id="SM00532">
    <property type="entry name" value="LIGANc"/>
    <property type="match status" value="1"/>
</dbReference>
<dbReference type="SUPFAM" id="SSF52113">
    <property type="entry name" value="BRCT domain"/>
    <property type="match status" value="1"/>
</dbReference>
<dbReference type="SUPFAM" id="SSF56091">
    <property type="entry name" value="DNA ligase/mRNA capping enzyme, catalytic domain"/>
    <property type="match status" value="1"/>
</dbReference>
<dbReference type="SUPFAM" id="SSF50249">
    <property type="entry name" value="Nucleic acid-binding proteins"/>
    <property type="match status" value="1"/>
</dbReference>
<dbReference type="SUPFAM" id="SSF47781">
    <property type="entry name" value="RuvA domain 2-like"/>
    <property type="match status" value="1"/>
</dbReference>
<dbReference type="PROSITE" id="PS50172">
    <property type="entry name" value="BRCT"/>
    <property type="match status" value="1"/>
</dbReference>
<dbReference type="PROSITE" id="PS01055">
    <property type="entry name" value="DNA_LIGASE_N1"/>
    <property type="match status" value="1"/>
</dbReference>
<dbReference type="PROSITE" id="PS01056">
    <property type="entry name" value="DNA_LIGASE_N2"/>
    <property type="match status" value="1"/>
</dbReference>
<name>DNLJ_BACMK</name>
<comment type="function">
    <text evidence="1">DNA ligase that catalyzes the formation of phosphodiester linkages between 5'-phosphoryl and 3'-hydroxyl groups in double-stranded DNA using NAD as a coenzyme and as the energy source for the reaction. It is essential for DNA replication and repair of damaged DNA.</text>
</comment>
<comment type="catalytic activity">
    <reaction evidence="1">
        <text>NAD(+) + (deoxyribonucleotide)n-3'-hydroxyl + 5'-phospho-(deoxyribonucleotide)m = (deoxyribonucleotide)n+m + AMP + beta-nicotinamide D-nucleotide.</text>
        <dbReference type="EC" id="6.5.1.2"/>
    </reaction>
</comment>
<comment type="cofactor">
    <cofactor evidence="1">
        <name>Mg(2+)</name>
        <dbReference type="ChEBI" id="CHEBI:18420"/>
    </cofactor>
    <cofactor evidence="1">
        <name>Mn(2+)</name>
        <dbReference type="ChEBI" id="CHEBI:29035"/>
    </cofactor>
</comment>
<comment type="similarity">
    <text evidence="1">Belongs to the NAD-dependent DNA ligase family. LigA subfamily.</text>
</comment>
<organism>
    <name type="scientific">Bacillus mycoides (strain KBAB4)</name>
    <name type="common">Bacillus weihenstephanensis</name>
    <dbReference type="NCBI Taxonomy" id="315730"/>
    <lineage>
        <taxon>Bacteria</taxon>
        <taxon>Bacillati</taxon>
        <taxon>Bacillota</taxon>
        <taxon>Bacilli</taxon>
        <taxon>Bacillales</taxon>
        <taxon>Bacillaceae</taxon>
        <taxon>Bacillus</taxon>
        <taxon>Bacillus cereus group</taxon>
    </lineage>
</organism>
<accession>A9VRG3</accession>
<protein>
    <recommendedName>
        <fullName evidence="1">DNA ligase</fullName>
        <ecNumber evidence="1">6.5.1.2</ecNumber>
    </recommendedName>
    <alternativeName>
        <fullName evidence="1">Polydeoxyribonucleotide synthase [NAD(+)]</fullName>
    </alternativeName>
</protein>
<proteinExistence type="inferred from homology"/>
<reference key="1">
    <citation type="journal article" date="2008" name="Chem. Biol. Interact.">
        <title>Extending the Bacillus cereus group genomics to putative food-borne pathogens of different toxicity.</title>
        <authorList>
            <person name="Lapidus A."/>
            <person name="Goltsman E."/>
            <person name="Auger S."/>
            <person name="Galleron N."/>
            <person name="Segurens B."/>
            <person name="Dossat C."/>
            <person name="Land M.L."/>
            <person name="Broussolle V."/>
            <person name="Brillard J."/>
            <person name="Guinebretiere M.-H."/>
            <person name="Sanchis V."/>
            <person name="Nguen-the C."/>
            <person name="Lereclus D."/>
            <person name="Richardson P."/>
            <person name="Wincker P."/>
            <person name="Weissenbach J."/>
            <person name="Ehrlich S.D."/>
            <person name="Sorokin A."/>
        </authorList>
    </citation>
    <scope>NUCLEOTIDE SEQUENCE [LARGE SCALE GENOMIC DNA]</scope>
    <source>
        <strain>KBAB4</strain>
    </source>
</reference>